<sequence>MSFSRTEAAPAATLPDLAATLAAPRDGAFLQLGAAFLTRQPAAPLPAPYVVGFSDDAARMLGLDPALRDAPGFAGLFCGNPTRDWPQASLPYASVYSGHQFGVWAGQLGDGRALTIGELEHDGRRYELQLKGAGRTPYSRMGDGRAVLRSSIREYLCSEAMHHLGIPTTRALAVIGSDQPVVREEIETSAVVTRVAESFVRFGHFEHFFANDRPEQLRALADHVIDRFYPACRDADDPYLALLAEATRRTAELVAQWQAVGFCHGVMNTDNMSILGVTIDYGPFGFIDAFDAKHVCNHSDTHGRYAYRMQPRIAHWNCFCLAQALLPLIGLHRDAPSEDARAERAVEDAHAVLGRFAEQFGPALERAMRAKLGLELEREGDAALANQLLEIMDASRADFTLTFRHLARVSKHDARGDAPVRDLFVDRDAFDRWANLYRARLSEEARDDAARAAAMNRANPKYVLRNHLAETAIRRAKEKDFSEVERLAAVLRRPFDEQPEHDAYAALPPDWASTLEVSCSS</sequence>
<organism>
    <name type="scientific">Burkholderia thailandensis (strain ATCC 700388 / DSM 13276 / CCUG 48851 / CIP 106301 / E264)</name>
    <dbReference type="NCBI Taxonomy" id="271848"/>
    <lineage>
        <taxon>Bacteria</taxon>
        <taxon>Pseudomonadati</taxon>
        <taxon>Pseudomonadota</taxon>
        <taxon>Betaproteobacteria</taxon>
        <taxon>Burkholderiales</taxon>
        <taxon>Burkholderiaceae</taxon>
        <taxon>Burkholderia</taxon>
        <taxon>pseudomallei group</taxon>
    </lineage>
</organism>
<feature type="chain" id="PRO_0000271816" description="Protein nucleotidyltransferase YdiU">
    <location>
        <begin position="1"/>
        <end position="521"/>
    </location>
</feature>
<feature type="active site" description="Proton acceptor" evidence="1">
    <location>
        <position position="270"/>
    </location>
</feature>
<feature type="binding site" evidence="1">
    <location>
        <position position="109"/>
    </location>
    <ligand>
        <name>ATP</name>
        <dbReference type="ChEBI" id="CHEBI:30616"/>
    </ligand>
</feature>
<feature type="binding site" evidence="1">
    <location>
        <position position="111"/>
    </location>
    <ligand>
        <name>ATP</name>
        <dbReference type="ChEBI" id="CHEBI:30616"/>
    </ligand>
</feature>
<feature type="binding site" evidence="1">
    <location>
        <position position="112"/>
    </location>
    <ligand>
        <name>ATP</name>
        <dbReference type="ChEBI" id="CHEBI:30616"/>
    </ligand>
</feature>
<feature type="binding site" evidence="1">
    <location>
        <position position="131"/>
    </location>
    <ligand>
        <name>ATP</name>
        <dbReference type="ChEBI" id="CHEBI:30616"/>
    </ligand>
</feature>
<feature type="binding site" evidence="1">
    <location>
        <position position="143"/>
    </location>
    <ligand>
        <name>ATP</name>
        <dbReference type="ChEBI" id="CHEBI:30616"/>
    </ligand>
</feature>
<feature type="binding site" evidence="1">
    <location>
        <position position="144"/>
    </location>
    <ligand>
        <name>ATP</name>
        <dbReference type="ChEBI" id="CHEBI:30616"/>
    </ligand>
</feature>
<feature type="binding site" evidence="1">
    <location>
        <position position="194"/>
    </location>
    <ligand>
        <name>ATP</name>
        <dbReference type="ChEBI" id="CHEBI:30616"/>
    </ligand>
</feature>
<feature type="binding site" evidence="1">
    <location>
        <position position="201"/>
    </location>
    <ligand>
        <name>ATP</name>
        <dbReference type="ChEBI" id="CHEBI:30616"/>
    </ligand>
</feature>
<feature type="binding site" evidence="1">
    <location>
        <position position="271"/>
    </location>
    <ligand>
        <name>Mg(2+)</name>
        <dbReference type="ChEBI" id="CHEBI:18420"/>
    </ligand>
</feature>
<feature type="binding site" evidence="1">
    <location>
        <position position="280"/>
    </location>
    <ligand>
        <name>ATP</name>
        <dbReference type="ChEBI" id="CHEBI:30616"/>
    </ligand>
</feature>
<feature type="binding site" evidence="1">
    <location>
        <position position="280"/>
    </location>
    <ligand>
        <name>Mg(2+)</name>
        <dbReference type="ChEBI" id="CHEBI:18420"/>
    </ligand>
</feature>
<dbReference type="EC" id="2.7.7.-" evidence="1"/>
<dbReference type="EC" id="2.7.7.108" evidence="1"/>
<dbReference type="EMBL" id="CP000086">
    <property type="protein sequence ID" value="ABC37670.1"/>
    <property type="molecule type" value="Genomic_DNA"/>
</dbReference>
<dbReference type="RefSeq" id="WP_009890644.1">
    <property type="nucleotide sequence ID" value="NZ_CP008785.1"/>
</dbReference>
<dbReference type="SMR" id="Q2SWN8"/>
<dbReference type="GeneID" id="45121862"/>
<dbReference type="KEGG" id="bte:BTH_I2140"/>
<dbReference type="HOGENOM" id="CLU_010245_4_0_4"/>
<dbReference type="Proteomes" id="UP000001930">
    <property type="component" value="Chromosome I"/>
</dbReference>
<dbReference type="GO" id="GO:0070733">
    <property type="term" value="F:AMPylase activity"/>
    <property type="evidence" value="ECO:0007669"/>
    <property type="project" value="TreeGrafter"/>
</dbReference>
<dbReference type="GO" id="GO:0005524">
    <property type="term" value="F:ATP binding"/>
    <property type="evidence" value="ECO:0007669"/>
    <property type="project" value="UniProtKB-UniRule"/>
</dbReference>
<dbReference type="GO" id="GO:0000287">
    <property type="term" value="F:magnesium ion binding"/>
    <property type="evidence" value="ECO:0007669"/>
    <property type="project" value="UniProtKB-UniRule"/>
</dbReference>
<dbReference type="HAMAP" id="MF_00692">
    <property type="entry name" value="YdiU_SelO"/>
    <property type="match status" value="1"/>
</dbReference>
<dbReference type="InterPro" id="IPR003846">
    <property type="entry name" value="SelO"/>
</dbReference>
<dbReference type="NCBIfam" id="NF000658">
    <property type="entry name" value="PRK00029.1"/>
    <property type="match status" value="1"/>
</dbReference>
<dbReference type="PANTHER" id="PTHR32057">
    <property type="entry name" value="PROTEIN ADENYLYLTRANSFERASE SELO, MITOCHONDRIAL"/>
    <property type="match status" value="1"/>
</dbReference>
<dbReference type="PANTHER" id="PTHR32057:SF14">
    <property type="entry name" value="PROTEIN ADENYLYLTRANSFERASE SELO, MITOCHONDRIAL"/>
    <property type="match status" value="1"/>
</dbReference>
<dbReference type="Pfam" id="PF02696">
    <property type="entry name" value="SelO"/>
    <property type="match status" value="1"/>
</dbReference>
<keyword id="KW-0067">ATP-binding</keyword>
<keyword id="KW-0460">Magnesium</keyword>
<keyword id="KW-0464">Manganese</keyword>
<keyword id="KW-0479">Metal-binding</keyword>
<keyword id="KW-0547">Nucleotide-binding</keyword>
<keyword id="KW-0548">Nucleotidyltransferase</keyword>
<keyword id="KW-0808">Transferase</keyword>
<accession>Q2SWN8</accession>
<gene>
    <name evidence="1" type="primary">ydiU</name>
    <name evidence="1" type="synonym">selO</name>
    <name type="ordered locus">BTH_I2140</name>
</gene>
<reference key="1">
    <citation type="journal article" date="2005" name="BMC Genomics">
        <title>Bacterial genome adaptation to niches: divergence of the potential virulence genes in three Burkholderia species of different survival strategies.</title>
        <authorList>
            <person name="Kim H.S."/>
            <person name="Schell M.A."/>
            <person name="Yu Y."/>
            <person name="Ulrich R.L."/>
            <person name="Sarria S.H."/>
            <person name="Nierman W.C."/>
            <person name="DeShazer D."/>
        </authorList>
    </citation>
    <scope>NUCLEOTIDE SEQUENCE [LARGE SCALE GENOMIC DNA]</scope>
    <source>
        <strain>ATCC 700388 / DSM 13276 / CCUG 48851 / CIP 106301 / E264</strain>
    </source>
</reference>
<name>SELO_BURTA</name>
<proteinExistence type="inferred from homology"/>
<evidence type="ECO:0000255" key="1">
    <source>
        <dbReference type="HAMAP-Rule" id="MF_00692"/>
    </source>
</evidence>
<comment type="function">
    <text evidence="1">Nucleotidyltransferase involved in the post-translational modification of proteins. It can catalyze the addition of adenosine monophosphate (AMP) or uridine monophosphate (UMP) to a protein, resulting in modifications known as AMPylation and UMPylation.</text>
</comment>
<comment type="catalytic activity">
    <reaction evidence="1">
        <text>L-seryl-[protein] + ATP = 3-O-(5'-adenylyl)-L-seryl-[protein] + diphosphate</text>
        <dbReference type="Rhea" id="RHEA:58120"/>
        <dbReference type="Rhea" id="RHEA-COMP:9863"/>
        <dbReference type="Rhea" id="RHEA-COMP:15073"/>
        <dbReference type="ChEBI" id="CHEBI:29999"/>
        <dbReference type="ChEBI" id="CHEBI:30616"/>
        <dbReference type="ChEBI" id="CHEBI:33019"/>
        <dbReference type="ChEBI" id="CHEBI:142516"/>
        <dbReference type="EC" id="2.7.7.108"/>
    </reaction>
</comment>
<comment type="catalytic activity">
    <reaction evidence="1">
        <text>L-threonyl-[protein] + ATP = 3-O-(5'-adenylyl)-L-threonyl-[protein] + diphosphate</text>
        <dbReference type="Rhea" id="RHEA:54292"/>
        <dbReference type="Rhea" id="RHEA-COMP:11060"/>
        <dbReference type="Rhea" id="RHEA-COMP:13847"/>
        <dbReference type="ChEBI" id="CHEBI:30013"/>
        <dbReference type="ChEBI" id="CHEBI:30616"/>
        <dbReference type="ChEBI" id="CHEBI:33019"/>
        <dbReference type="ChEBI" id="CHEBI:138113"/>
        <dbReference type="EC" id="2.7.7.108"/>
    </reaction>
</comment>
<comment type="catalytic activity">
    <reaction evidence="1">
        <text>L-tyrosyl-[protein] + ATP = O-(5'-adenylyl)-L-tyrosyl-[protein] + diphosphate</text>
        <dbReference type="Rhea" id="RHEA:54288"/>
        <dbReference type="Rhea" id="RHEA-COMP:10136"/>
        <dbReference type="Rhea" id="RHEA-COMP:13846"/>
        <dbReference type="ChEBI" id="CHEBI:30616"/>
        <dbReference type="ChEBI" id="CHEBI:33019"/>
        <dbReference type="ChEBI" id="CHEBI:46858"/>
        <dbReference type="ChEBI" id="CHEBI:83624"/>
        <dbReference type="EC" id="2.7.7.108"/>
    </reaction>
</comment>
<comment type="catalytic activity">
    <reaction evidence="1">
        <text>L-histidyl-[protein] + UTP = N(tele)-(5'-uridylyl)-L-histidyl-[protein] + diphosphate</text>
        <dbReference type="Rhea" id="RHEA:83891"/>
        <dbReference type="Rhea" id="RHEA-COMP:9745"/>
        <dbReference type="Rhea" id="RHEA-COMP:20239"/>
        <dbReference type="ChEBI" id="CHEBI:29979"/>
        <dbReference type="ChEBI" id="CHEBI:33019"/>
        <dbReference type="ChEBI" id="CHEBI:46398"/>
        <dbReference type="ChEBI" id="CHEBI:233474"/>
    </reaction>
</comment>
<comment type="catalytic activity">
    <reaction evidence="1">
        <text>L-seryl-[protein] + UTP = O-(5'-uridylyl)-L-seryl-[protein] + diphosphate</text>
        <dbReference type="Rhea" id="RHEA:64604"/>
        <dbReference type="Rhea" id="RHEA-COMP:9863"/>
        <dbReference type="Rhea" id="RHEA-COMP:16635"/>
        <dbReference type="ChEBI" id="CHEBI:29999"/>
        <dbReference type="ChEBI" id="CHEBI:33019"/>
        <dbReference type="ChEBI" id="CHEBI:46398"/>
        <dbReference type="ChEBI" id="CHEBI:156051"/>
    </reaction>
</comment>
<comment type="catalytic activity">
    <reaction evidence="1">
        <text>L-tyrosyl-[protein] + UTP = O-(5'-uridylyl)-L-tyrosyl-[protein] + diphosphate</text>
        <dbReference type="Rhea" id="RHEA:83887"/>
        <dbReference type="Rhea" id="RHEA-COMP:10136"/>
        <dbReference type="Rhea" id="RHEA-COMP:20238"/>
        <dbReference type="ChEBI" id="CHEBI:33019"/>
        <dbReference type="ChEBI" id="CHEBI:46398"/>
        <dbReference type="ChEBI" id="CHEBI:46858"/>
        <dbReference type="ChEBI" id="CHEBI:90602"/>
    </reaction>
</comment>
<comment type="cofactor">
    <cofactor evidence="1">
        <name>Mg(2+)</name>
        <dbReference type="ChEBI" id="CHEBI:18420"/>
    </cofactor>
    <cofactor evidence="1">
        <name>Mn(2+)</name>
        <dbReference type="ChEBI" id="CHEBI:29035"/>
    </cofactor>
</comment>
<comment type="similarity">
    <text evidence="1">Belongs to the SELO family.</text>
</comment>
<protein>
    <recommendedName>
        <fullName evidence="1">Protein nucleotidyltransferase YdiU</fullName>
        <ecNumber evidence="1">2.7.7.-</ecNumber>
    </recommendedName>
    <alternativeName>
        <fullName evidence="1">Protein adenylyltransferase YdiU</fullName>
        <ecNumber evidence="1">2.7.7.108</ecNumber>
    </alternativeName>
    <alternativeName>
        <fullName evidence="1">Protein uridylyltransferase YdiU</fullName>
        <ecNumber evidence="1">2.7.7.-</ecNumber>
    </alternativeName>
</protein>